<reference key="1">
    <citation type="journal article" date="2009" name="Proc. Natl. Acad. Sci. U.S.A.">
        <title>Biogeography of the Sulfolobus islandicus pan-genome.</title>
        <authorList>
            <person name="Reno M.L."/>
            <person name="Held N.L."/>
            <person name="Fields C.J."/>
            <person name="Burke P.V."/>
            <person name="Whitaker R.J."/>
        </authorList>
    </citation>
    <scope>NUCLEOTIDE SEQUENCE [LARGE SCALE GENOMIC DNA]</scope>
    <source>
        <strain>Y.G.57.14 / Yellowstone #1</strain>
    </source>
</reference>
<feature type="chain" id="PRO_1000203482" description="3-methyl-2-oxobutanoate hydroxymethyltransferase">
    <location>
        <begin position="1"/>
        <end position="267"/>
    </location>
</feature>
<feature type="active site" description="Proton acceptor" evidence="1">
    <location>
        <position position="182"/>
    </location>
</feature>
<feature type="binding site" evidence="1">
    <location>
        <begin position="45"/>
        <end position="46"/>
    </location>
    <ligand>
        <name>3-methyl-2-oxobutanoate</name>
        <dbReference type="ChEBI" id="CHEBI:11851"/>
    </ligand>
</feature>
<feature type="binding site" evidence="1">
    <location>
        <position position="45"/>
    </location>
    <ligand>
        <name>Mg(2+)</name>
        <dbReference type="ChEBI" id="CHEBI:18420"/>
    </ligand>
</feature>
<feature type="binding site" evidence="1">
    <location>
        <position position="84"/>
    </location>
    <ligand>
        <name>3-methyl-2-oxobutanoate</name>
        <dbReference type="ChEBI" id="CHEBI:11851"/>
    </ligand>
</feature>
<feature type="binding site" evidence="1">
    <location>
        <position position="84"/>
    </location>
    <ligand>
        <name>Mg(2+)</name>
        <dbReference type="ChEBI" id="CHEBI:18420"/>
    </ligand>
</feature>
<feature type="binding site" evidence="1">
    <location>
        <position position="113"/>
    </location>
    <ligand>
        <name>3-methyl-2-oxobutanoate</name>
        <dbReference type="ChEBI" id="CHEBI:11851"/>
    </ligand>
</feature>
<feature type="binding site" evidence="1">
    <location>
        <position position="115"/>
    </location>
    <ligand>
        <name>Mg(2+)</name>
        <dbReference type="ChEBI" id="CHEBI:18420"/>
    </ligand>
</feature>
<dbReference type="EC" id="2.1.2.11" evidence="1"/>
<dbReference type="EMBL" id="CP001403">
    <property type="protein sequence ID" value="ACP44488.1"/>
    <property type="molecule type" value="Genomic_DNA"/>
</dbReference>
<dbReference type="RefSeq" id="WP_012715463.1">
    <property type="nucleotide sequence ID" value="NC_012622.1"/>
</dbReference>
<dbReference type="SMR" id="C3N926"/>
<dbReference type="GeneID" id="7806345"/>
<dbReference type="KEGG" id="siy:YG5714_0195"/>
<dbReference type="HOGENOM" id="CLU_036645_1_0_2"/>
<dbReference type="UniPathway" id="UPA00241"/>
<dbReference type="Proteomes" id="UP000002308">
    <property type="component" value="Chromosome"/>
</dbReference>
<dbReference type="GO" id="GO:0005737">
    <property type="term" value="C:cytoplasm"/>
    <property type="evidence" value="ECO:0007669"/>
    <property type="project" value="UniProtKB-SubCell"/>
</dbReference>
<dbReference type="GO" id="GO:0003864">
    <property type="term" value="F:3-methyl-2-oxobutanoate hydroxymethyltransferase activity"/>
    <property type="evidence" value="ECO:0007669"/>
    <property type="project" value="UniProtKB-UniRule"/>
</dbReference>
<dbReference type="GO" id="GO:0000287">
    <property type="term" value="F:magnesium ion binding"/>
    <property type="evidence" value="ECO:0007669"/>
    <property type="project" value="TreeGrafter"/>
</dbReference>
<dbReference type="GO" id="GO:0015937">
    <property type="term" value="P:coenzyme A biosynthetic process"/>
    <property type="evidence" value="ECO:0007669"/>
    <property type="project" value="UniProtKB-UniRule"/>
</dbReference>
<dbReference type="GO" id="GO:0015940">
    <property type="term" value="P:pantothenate biosynthetic process"/>
    <property type="evidence" value="ECO:0007669"/>
    <property type="project" value="InterPro"/>
</dbReference>
<dbReference type="CDD" id="cd06557">
    <property type="entry name" value="KPHMT-like"/>
    <property type="match status" value="1"/>
</dbReference>
<dbReference type="FunFam" id="3.20.20.60:FF:000052">
    <property type="entry name" value="3-methyl-2-oxobutanoate hydroxymethyltransferase"/>
    <property type="match status" value="1"/>
</dbReference>
<dbReference type="Gene3D" id="3.20.20.60">
    <property type="entry name" value="Phosphoenolpyruvate-binding domains"/>
    <property type="match status" value="1"/>
</dbReference>
<dbReference type="HAMAP" id="MF_00156">
    <property type="entry name" value="PanB"/>
    <property type="match status" value="1"/>
</dbReference>
<dbReference type="InterPro" id="IPR003700">
    <property type="entry name" value="Pantoate_hydroxy_MeTrfase"/>
</dbReference>
<dbReference type="InterPro" id="IPR015813">
    <property type="entry name" value="Pyrv/PenolPyrv_kinase-like_dom"/>
</dbReference>
<dbReference type="InterPro" id="IPR040442">
    <property type="entry name" value="Pyrv_kinase-like_dom_sf"/>
</dbReference>
<dbReference type="NCBIfam" id="TIGR00222">
    <property type="entry name" value="panB"/>
    <property type="match status" value="1"/>
</dbReference>
<dbReference type="NCBIfam" id="NF001452">
    <property type="entry name" value="PRK00311.1"/>
    <property type="match status" value="1"/>
</dbReference>
<dbReference type="PANTHER" id="PTHR20881">
    <property type="entry name" value="3-METHYL-2-OXOBUTANOATE HYDROXYMETHYLTRANSFERASE"/>
    <property type="match status" value="1"/>
</dbReference>
<dbReference type="PANTHER" id="PTHR20881:SF0">
    <property type="entry name" value="3-METHYL-2-OXOBUTANOATE HYDROXYMETHYLTRANSFERASE"/>
    <property type="match status" value="1"/>
</dbReference>
<dbReference type="Pfam" id="PF02548">
    <property type="entry name" value="Pantoate_transf"/>
    <property type="match status" value="1"/>
</dbReference>
<dbReference type="PIRSF" id="PIRSF000388">
    <property type="entry name" value="Pantoate_hydroxy_MeTrfase"/>
    <property type="match status" value="1"/>
</dbReference>
<dbReference type="SUPFAM" id="SSF51621">
    <property type="entry name" value="Phosphoenolpyruvate/pyruvate domain"/>
    <property type="match status" value="1"/>
</dbReference>
<name>PANB_SACI7</name>
<accession>C3N926</accession>
<keyword id="KW-0173">Coenzyme A biosynthesis</keyword>
<keyword id="KW-0963">Cytoplasm</keyword>
<keyword id="KW-0460">Magnesium</keyword>
<keyword id="KW-0479">Metal-binding</keyword>
<keyword id="KW-0808">Transferase</keyword>
<gene>
    <name evidence="1" type="primary">panB</name>
    <name type="ordered locus">YG5714_0195</name>
</gene>
<comment type="function">
    <text evidence="1">Catalyzes the reversible reaction in which hydroxymethyl group from 5,10-methylenetetrahydrofolate is transferred onto alpha-ketoisovalerate to form ketopantoate.</text>
</comment>
<comment type="catalytic activity">
    <reaction evidence="1">
        <text>3-methyl-2-oxobutanoate + (6R)-5,10-methylene-5,6,7,8-tetrahydrofolate + H2O = 2-dehydropantoate + (6S)-5,6,7,8-tetrahydrofolate</text>
        <dbReference type="Rhea" id="RHEA:11824"/>
        <dbReference type="ChEBI" id="CHEBI:11561"/>
        <dbReference type="ChEBI" id="CHEBI:11851"/>
        <dbReference type="ChEBI" id="CHEBI:15377"/>
        <dbReference type="ChEBI" id="CHEBI:15636"/>
        <dbReference type="ChEBI" id="CHEBI:57453"/>
        <dbReference type="EC" id="2.1.2.11"/>
    </reaction>
</comment>
<comment type="cofactor">
    <cofactor evidence="1">
        <name>Mg(2+)</name>
        <dbReference type="ChEBI" id="CHEBI:18420"/>
    </cofactor>
    <text evidence="1">Binds 1 Mg(2+) ion per subunit.</text>
</comment>
<comment type="pathway">
    <text evidence="1">Cofactor biosynthesis; coenzyme A biosynthesis.</text>
</comment>
<comment type="subunit">
    <text evidence="1">Homodecamer; pentamer of dimers.</text>
</comment>
<comment type="subcellular location">
    <subcellularLocation>
        <location evidence="1">Cytoplasm</location>
    </subcellularLocation>
</comment>
<comment type="similarity">
    <text evidence="1">Belongs to the PanB family.</text>
</comment>
<proteinExistence type="inferred from homology"/>
<organism>
    <name type="scientific">Saccharolobus islandicus (strain Y.G.57.14 / Yellowstone #1)</name>
    <name type="common">Sulfolobus islandicus</name>
    <dbReference type="NCBI Taxonomy" id="439386"/>
    <lineage>
        <taxon>Archaea</taxon>
        <taxon>Thermoproteota</taxon>
        <taxon>Thermoprotei</taxon>
        <taxon>Sulfolobales</taxon>
        <taxon>Sulfolobaceae</taxon>
        <taxon>Saccharolobus</taxon>
    </lineage>
</organism>
<evidence type="ECO:0000255" key="1">
    <source>
        <dbReference type="HAMAP-Rule" id="MF_00156"/>
    </source>
</evidence>
<sequence>MKKVTIRDFIKKKSTKEKITMLTAYDYPTAKIISNTGLDSILVGDSLGMVVLGYANTLNVTMRDMISHTRAVARANPPQLIVADMPFLSYEIDTKSAVKNAGLLVKAGSDAIKLEGGEEMKDTVKAIVKAGIPVMGHIGLTPQRFLRLGGFRTIGKTKQEEDQLIKDSLELEDAGVFSLVIENTYVDIAKRITEKLNIPTICIGAGPYCDGQVLVINDLLGLSEFTPYFAKSYVNLKEIISNAINQYIIDVKNNKFPEKQHYKERES</sequence>
<protein>
    <recommendedName>
        <fullName evidence="1">3-methyl-2-oxobutanoate hydroxymethyltransferase</fullName>
        <ecNumber evidence="1">2.1.2.11</ecNumber>
    </recommendedName>
    <alternativeName>
        <fullName evidence="1">Ketopantoate hydroxymethyltransferase</fullName>
        <shortName evidence="1">KPHMT</shortName>
    </alternativeName>
</protein>